<sequence length="101" mass="10963">MNKLGHNELKECLKTATDSLQTVQPSISQTCTSYGPALGAPLPGRNEVALLTSLPPNYEISEGKPRAISAYVRAGKGNVTRRRKKTHLGNDDGKKEAQEKM</sequence>
<name>CLU1O_HUMAN</name>
<accession>Q5K130</accession>
<proteinExistence type="uncertain"/>
<keyword id="KW-1185">Reference proteome</keyword>
<dbReference type="EMBL" id="AJ845168">
    <property type="protein sequence ID" value="CAH61082.1"/>
    <property type="molecule type" value="mRNA"/>
</dbReference>
<dbReference type="RefSeq" id="NP_001020403.1">
    <property type="nucleotide sequence ID" value="NM_001025232.1"/>
</dbReference>
<dbReference type="BioGRID" id="299866">
    <property type="interactions" value="5"/>
</dbReference>
<dbReference type="IntAct" id="Q5K130">
    <property type="interactions" value="5"/>
</dbReference>
<dbReference type="STRING" id="9606.ENSP00000367748"/>
<dbReference type="BioMuta" id="CLLU1OS"/>
<dbReference type="MassIVE" id="Q5K130"/>
<dbReference type="PaxDb" id="9606-ENSP00000367748"/>
<dbReference type="DNASU" id="574016"/>
<dbReference type="UCSC" id="uc001tcb.1">
    <property type="organism name" value="human"/>
</dbReference>
<dbReference type="AGR" id="HGNC:24070"/>
<dbReference type="GeneCards" id="CLLU1-AS1"/>
<dbReference type="HGNC" id="HGNC:24070">
    <property type="gene designation" value="CLLU1-AS1"/>
</dbReference>
<dbReference type="MIM" id="616989">
    <property type="type" value="gene"/>
</dbReference>
<dbReference type="neXtProt" id="NX_Q5K130"/>
<dbReference type="PharmGKB" id="PA142672096"/>
<dbReference type="eggNOG" id="ENOG502TH3A">
    <property type="taxonomic scope" value="Eukaryota"/>
</dbReference>
<dbReference type="HOGENOM" id="CLU_183896_0_0_1"/>
<dbReference type="InParanoid" id="Q5K130"/>
<dbReference type="PAN-GO" id="Q5K130">
    <property type="GO annotations" value="0 GO annotations based on evolutionary models"/>
</dbReference>
<dbReference type="PhylomeDB" id="Q5K130"/>
<dbReference type="TreeFam" id="TF354016"/>
<dbReference type="PathwayCommons" id="Q5K130"/>
<dbReference type="SignaLink" id="Q5K130"/>
<dbReference type="BioGRID-ORCS" id="574016">
    <property type="hits" value="10 hits in 1129 CRISPR screens"/>
</dbReference>
<dbReference type="GenomeRNAi" id="574016"/>
<dbReference type="Pharos" id="Q5K130">
    <property type="development level" value="Tdark"/>
</dbReference>
<dbReference type="Proteomes" id="UP000005640">
    <property type="component" value="Chromosome 12"/>
</dbReference>
<dbReference type="RNAct" id="Q5K130">
    <property type="molecule type" value="protein"/>
</dbReference>
<protein>
    <recommendedName>
        <fullName>Putative uncharacterized protein CLLU1-AS1</fullName>
    </recommendedName>
    <alternativeName>
        <fullName evidence="3">CLLU1 antisense RNA 1</fullName>
    </alternativeName>
    <alternativeName>
        <fullName>Chronic lymphocytic leukemia up-regulated protein 1 opposite strand transcript protein</fullName>
    </alternativeName>
</protein>
<reference key="1">
    <citation type="journal article" date="2006" name="Blood">
        <title>Identification of a gene on chromosome 12q22 uniquely overexpressed in chronic lymphocytic leukemia.</title>
        <authorList>
            <person name="Buhl A.M."/>
            <person name="Jurlander J."/>
            <person name="Joergensen F.S."/>
            <person name="Ottesen A.M."/>
            <person name="Cowland J.B."/>
            <person name="Gjerdrum L.M."/>
            <person name="Hansen B.V."/>
            <person name="Leffers H."/>
        </authorList>
    </citation>
    <scope>NUCLEOTIDE SEQUENCE [MRNA]</scope>
    <source>
        <tissue>Blood</tissue>
    </source>
</reference>
<gene>
    <name evidence="3" type="primary">CLLU1-AS1</name>
    <name type="synonym">CLLU1OS</name>
</gene>
<comment type="caution">
    <text evidence="2">Product of a dubious gene prediction.</text>
</comment>
<evidence type="ECO:0000256" key="1">
    <source>
        <dbReference type="SAM" id="MobiDB-lite"/>
    </source>
</evidence>
<evidence type="ECO:0000305" key="2"/>
<evidence type="ECO:0000312" key="3">
    <source>
        <dbReference type="HGNC" id="HGNC:24070"/>
    </source>
</evidence>
<feature type="chain" id="PRO_0000297650" description="Putative uncharacterized protein CLLU1-AS1">
    <location>
        <begin position="1"/>
        <end position="101"/>
    </location>
</feature>
<feature type="region of interest" description="Disordered" evidence="1">
    <location>
        <begin position="76"/>
        <end position="101"/>
    </location>
</feature>
<feature type="compositionally biased region" description="Basic and acidic residues" evidence="1">
    <location>
        <begin position="88"/>
        <end position="101"/>
    </location>
</feature>
<organism>
    <name type="scientific">Homo sapiens</name>
    <name type="common">Human</name>
    <dbReference type="NCBI Taxonomy" id="9606"/>
    <lineage>
        <taxon>Eukaryota</taxon>
        <taxon>Metazoa</taxon>
        <taxon>Chordata</taxon>
        <taxon>Craniata</taxon>
        <taxon>Vertebrata</taxon>
        <taxon>Euteleostomi</taxon>
        <taxon>Mammalia</taxon>
        <taxon>Eutheria</taxon>
        <taxon>Euarchontoglires</taxon>
        <taxon>Primates</taxon>
        <taxon>Haplorrhini</taxon>
        <taxon>Catarrhini</taxon>
        <taxon>Hominidae</taxon>
        <taxon>Homo</taxon>
    </lineage>
</organism>